<gene>
    <name evidence="1" type="primary">surE2</name>
    <name type="ordered locus">Bcep18194_A5124</name>
</gene>
<reference key="1">
    <citation type="submission" date="2005-10" db="EMBL/GenBank/DDBJ databases">
        <title>Complete sequence of chromosome 1 of Burkholderia sp. 383.</title>
        <authorList>
            <consortium name="US DOE Joint Genome Institute"/>
            <person name="Copeland A."/>
            <person name="Lucas S."/>
            <person name="Lapidus A."/>
            <person name="Barry K."/>
            <person name="Detter J.C."/>
            <person name="Glavina T."/>
            <person name="Hammon N."/>
            <person name="Israni S."/>
            <person name="Pitluck S."/>
            <person name="Chain P."/>
            <person name="Malfatti S."/>
            <person name="Shin M."/>
            <person name="Vergez L."/>
            <person name="Schmutz J."/>
            <person name="Larimer F."/>
            <person name="Land M."/>
            <person name="Kyrpides N."/>
            <person name="Lykidis A."/>
            <person name="Richardson P."/>
        </authorList>
    </citation>
    <scope>NUCLEOTIDE SEQUENCE [LARGE SCALE GENOMIC DNA]</scope>
    <source>
        <strain>ATCC 17760 / DSM 23089 / LMG 22485 / NCIMB 9086 / R18194 / 383</strain>
    </source>
</reference>
<name>SURE2_BURL3</name>
<feature type="chain" id="PRO_0000235601" description="5'-nucleotidase SurE 2">
    <location>
        <begin position="1"/>
        <end position="253"/>
    </location>
</feature>
<feature type="binding site" evidence="1">
    <location>
        <position position="8"/>
    </location>
    <ligand>
        <name>a divalent metal cation</name>
        <dbReference type="ChEBI" id="CHEBI:60240"/>
    </ligand>
</feature>
<feature type="binding site" evidence="1">
    <location>
        <position position="9"/>
    </location>
    <ligand>
        <name>a divalent metal cation</name>
        <dbReference type="ChEBI" id="CHEBI:60240"/>
    </ligand>
</feature>
<feature type="binding site" evidence="1">
    <location>
        <position position="39"/>
    </location>
    <ligand>
        <name>a divalent metal cation</name>
        <dbReference type="ChEBI" id="CHEBI:60240"/>
    </ligand>
</feature>
<feature type="binding site" evidence="1">
    <location>
        <position position="92"/>
    </location>
    <ligand>
        <name>a divalent metal cation</name>
        <dbReference type="ChEBI" id="CHEBI:60240"/>
    </ligand>
</feature>
<dbReference type="EC" id="3.1.3.5" evidence="1"/>
<dbReference type="EMBL" id="CP000151">
    <property type="protein sequence ID" value="ABB08718.1"/>
    <property type="molecule type" value="Genomic_DNA"/>
</dbReference>
<dbReference type="RefSeq" id="WP_011352273.1">
    <property type="nucleotide sequence ID" value="NC_007510.1"/>
</dbReference>
<dbReference type="SMR" id="Q39FP8"/>
<dbReference type="GeneID" id="45095000"/>
<dbReference type="KEGG" id="bur:Bcep18194_A5124"/>
<dbReference type="PATRIC" id="fig|482957.22.peg.2062"/>
<dbReference type="HOGENOM" id="CLU_045192_1_2_4"/>
<dbReference type="Proteomes" id="UP000002705">
    <property type="component" value="Chromosome 1"/>
</dbReference>
<dbReference type="GO" id="GO:0005737">
    <property type="term" value="C:cytoplasm"/>
    <property type="evidence" value="ECO:0007669"/>
    <property type="project" value="UniProtKB-SubCell"/>
</dbReference>
<dbReference type="GO" id="GO:0008254">
    <property type="term" value="F:3'-nucleotidase activity"/>
    <property type="evidence" value="ECO:0007669"/>
    <property type="project" value="TreeGrafter"/>
</dbReference>
<dbReference type="GO" id="GO:0008253">
    <property type="term" value="F:5'-nucleotidase activity"/>
    <property type="evidence" value="ECO:0007669"/>
    <property type="project" value="UniProtKB-UniRule"/>
</dbReference>
<dbReference type="GO" id="GO:0004309">
    <property type="term" value="F:exopolyphosphatase activity"/>
    <property type="evidence" value="ECO:0007669"/>
    <property type="project" value="TreeGrafter"/>
</dbReference>
<dbReference type="GO" id="GO:0046872">
    <property type="term" value="F:metal ion binding"/>
    <property type="evidence" value="ECO:0007669"/>
    <property type="project" value="UniProtKB-UniRule"/>
</dbReference>
<dbReference type="GO" id="GO:0000166">
    <property type="term" value="F:nucleotide binding"/>
    <property type="evidence" value="ECO:0007669"/>
    <property type="project" value="UniProtKB-KW"/>
</dbReference>
<dbReference type="FunFam" id="3.40.1210.10:FF:000001">
    <property type="entry name" value="5'/3'-nucleotidase SurE"/>
    <property type="match status" value="1"/>
</dbReference>
<dbReference type="Gene3D" id="3.40.1210.10">
    <property type="entry name" value="Survival protein SurE-like phosphatase/nucleotidase"/>
    <property type="match status" value="1"/>
</dbReference>
<dbReference type="HAMAP" id="MF_00060">
    <property type="entry name" value="SurE"/>
    <property type="match status" value="1"/>
</dbReference>
<dbReference type="InterPro" id="IPR030048">
    <property type="entry name" value="SurE"/>
</dbReference>
<dbReference type="InterPro" id="IPR002828">
    <property type="entry name" value="SurE-like_Pase/nucleotidase"/>
</dbReference>
<dbReference type="InterPro" id="IPR036523">
    <property type="entry name" value="SurE-like_sf"/>
</dbReference>
<dbReference type="NCBIfam" id="NF001489">
    <property type="entry name" value="PRK00346.1-3"/>
    <property type="match status" value="1"/>
</dbReference>
<dbReference type="NCBIfam" id="NF001490">
    <property type="entry name" value="PRK00346.1-4"/>
    <property type="match status" value="1"/>
</dbReference>
<dbReference type="NCBIfam" id="TIGR00087">
    <property type="entry name" value="surE"/>
    <property type="match status" value="1"/>
</dbReference>
<dbReference type="PANTHER" id="PTHR30457">
    <property type="entry name" value="5'-NUCLEOTIDASE SURE"/>
    <property type="match status" value="1"/>
</dbReference>
<dbReference type="PANTHER" id="PTHR30457:SF12">
    <property type="entry name" value="5'_3'-NUCLEOTIDASE SURE"/>
    <property type="match status" value="1"/>
</dbReference>
<dbReference type="Pfam" id="PF01975">
    <property type="entry name" value="SurE"/>
    <property type="match status" value="1"/>
</dbReference>
<dbReference type="SUPFAM" id="SSF64167">
    <property type="entry name" value="SurE-like"/>
    <property type="match status" value="1"/>
</dbReference>
<proteinExistence type="inferred from homology"/>
<protein>
    <recommendedName>
        <fullName evidence="1">5'-nucleotidase SurE 2</fullName>
        <ecNumber evidence="1">3.1.3.5</ecNumber>
    </recommendedName>
    <alternativeName>
        <fullName evidence="1">Nucleoside 5'-monophosphate phosphohydrolase 2</fullName>
    </alternativeName>
</protein>
<keyword id="KW-0963">Cytoplasm</keyword>
<keyword id="KW-0378">Hydrolase</keyword>
<keyword id="KW-0479">Metal-binding</keyword>
<keyword id="KW-0547">Nucleotide-binding</keyword>
<sequence length="253" mass="26768">MRILLSNDDGYLAPGLAALSDALQPLAELTVIAPEQNCSGASNSLTLSRPLSVQRAASTGFFYVNGTPTDSVHVALTGMADARPDLVVSGINNGQNMGEDTLYSGTVAAATEGIMFGVPAIAFSLVDKGWAHLPDAARVAAEIVKHYLAHPLPGQPLLNVNIPNLPYDELKGWKVTRLGKRHPSQPVIRQTDPRGEPIYWIGAAGEALDASDGTDFHAVANGFVSITPLQLDLTHTQMLPATREWARAGGRAS</sequence>
<organism>
    <name type="scientific">Burkholderia lata (strain ATCC 17760 / DSM 23089 / LMG 22485 / NCIMB 9086 / R18194 / 383)</name>
    <dbReference type="NCBI Taxonomy" id="482957"/>
    <lineage>
        <taxon>Bacteria</taxon>
        <taxon>Pseudomonadati</taxon>
        <taxon>Pseudomonadota</taxon>
        <taxon>Betaproteobacteria</taxon>
        <taxon>Burkholderiales</taxon>
        <taxon>Burkholderiaceae</taxon>
        <taxon>Burkholderia</taxon>
        <taxon>Burkholderia cepacia complex</taxon>
    </lineage>
</organism>
<comment type="function">
    <text evidence="1">Nucleotidase that shows phosphatase activity on nucleoside 5'-monophosphates.</text>
</comment>
<comment type="catalytic activity">
    <reaction evidence="1">
        <text>a ribonucleoside 5'-phosphate + H2O = a ribonucleoside + phosphate</text>
        <dbReference type="Rhea" id="RHEA:12484"/>
        <dbReference type="ChEBI" id="CHEBI:15377"/>
        <dbReference type="ChEBI" id="CHEBI:18254"/>
        <dbReference type="ChEBI" id="CHEBI:43474"/>
        <dbReference type="ChEBI" id="CHEBI:58043"/>
        <dbReference type="EC" id="3.1.3.5"/>
    </reaction>
</comment>
<comment type="cofactor">
    <cofactor evidence="1">
        <name>a divalent metal cation</name>
        <dbReference type="ChEBI" id="CHEBI:60240"/>
    </cofactor>
    <text evidence="1">Binds 1 divalent metal cation per subunit.</text>
</comment>
<comment type="subcellular location">
    <subcellularLocation>
        <location evidence="1">Cytoplasm</location>
    </subcellularLocation>
</comment>
<comment type="similarity">
    <text evidence="1">Belongs to the SurE nucleotidase family.</text>
</comment>
<evidence type="ECO:0000255" key="1">
    <source>
        <dbReference type="HAMAP-Rule" id="MF_00060"/>
    </source>
</evidence>
<accession>Q39FP8</accession>